<gene>
    <name evidence="1" type="primary">murC</name>
    <name type="ordered locus">EAT1b_0705</name>
</gene>
<feature type="chain" id="PRO_1000202180" description="UDP-N-acetylmuramate--L-alanine ligase">
    <location>
        <begin position="1"/>
        <end position="435"/>
    </location>
</feature>
<feature type="binding site" evidence="1">
    <location>
        <begin position="108"/>
        <end position="114"/>
    </location>
    <ligand>
        <name>ATP</name>
        <dbReference type="ChEBI" id="CHEBI:30616"/>
    </ligand>
</feature>
<dbReference type="EC" id="6.3.2.8" evidence="1"/>
<dbReference type="EMBL" id="CP001615">
    <property type="protein sequence ID" value="ACQ69636.1"/>
    <property type="molecule type" value="Genomic_DNA"/>
</dbReference>
<dbReference type="RefSeq" id="WP_012726755.1">
    <property type="nucleotide sequence ID" value="NC_012673.1"/>
</dbReference>
<dbReference type="SMR" id="C4L4P1"/>
<dbReference type="STRING" id="360911.EAT1b_0705"/>
<dbReference type="KEGG" id="eat:EAT1b_0705"/>
<dbReference type="eggNOG" id="COG0773">
    <property type="taxonomic scope" value="Bacteria"/>
</dbReference>
<dbReference type="HOGENOM" id="CLU_028104_1_0_9"/>
<dbReference type="OrthoDB" id="9804126at2"/>
<dbReference type="UniPathway" id="UPA00219"/>
<dbReference type="Proteomes" id="UP000000716">
    <property type="component" value="Chromosome"/>
</dbReference>
<dbReference type="GO" id="GO:0005737">
    <property type="term" value="C:cytoplasm"/>
    <property type="evidence" value="ECO:0007669"/>
    <property type="project" value="UniProtKB-SubCell"/>
</dbReference>
<dbReference type="GO" id="GO:0005524">
    <property type="term" value="F:ATP binding"/>
    <property type="evidence" value="ECO:0007669"/>
    <property type="project" value="UniProtKB-UniRule"/>
</dbReference>
<dbReference type="GO" id="GO:0008763">
    <property type="term" value="F:UDP-N-acetylmuramate-L-alanine ligase activity"/>
    <property type="evidence" value="ECO:0007669"/>
    <property type="project" value="UniProtKB-UniRule"/>
</dbReference>
<dbReference type="GO" id="GO:0051301">
    <property type="term" value="P:cell division"/>
    <property type="evidence" value="ECO:0007669"/>
    <property type="project" value="UniProtKB-KW"/>
</dbReference>
<dbReference type="GO" id="GO:0071555">
    <property type="term" value="P:cell wall organization"/>
    <property type="evidence" value="ECO:0007669"/>
    <property type="project" value="UniProtKB-KW"/>
</dbReference>
<dbReference type="GO" id="GO:0009252">
    <property type="term" value="P:peptidoglycan biosynthetic process"/>
    <property type="evidence" value="ECO:0007669"/>
    <property type="project" value="UniProtKB-UniRule"/>
</dbReference>
<dbReference type="GO" id="GO:0008360">
    <property type="term" value="P:regulation of cell shape"/>
    <property type="evidence" value="ECO:0007669"/>
    <property type="project" value="UniProtKB-KW"/>
</dbReference>
<dbReference type="Gene3D" id="3.90.190.20">
    <property type="entry name" value="Mur ligase, C-terminal domain"/>
    <property type="match status" value="1"/>
</dbReference>
<dbReference type="Gene3D" id="3.40.1190.10">
    <property type="entry name" value="Mur-like, catalytic domain"/>
    <property type="match status" value="1"/>
</dbReference>
<dbReference type="Gene3D" id="3.40.50.720">
    <property type="entry name" value="NAD(P)-binding Rossmann-like Domain"/>
    <property type="match status" value="1"/>
</dbReference>
<dbReference type="HAMAP" id="MF_00046">
    <property type="entry name" value="MurC"/>
    <property type="match status" value="1"/>
</dbReference>
<dbReference type="InterPro" id="IPR036565">
    <property type="entry name" value="Mur-like_cat_sf"/>
</dbReference>
<dbReference type="InterPro" id="IPR004101">
    <property type="entry name" value="Mur_ligase_C"/>
</dbReference>
<dbReference type="InterPro" id="IPR036615">
    <property type="entry name" value="Mur_ligase_C_dom_sf"/>
</dbReference>
<dbReference type="InterPro" id="IPR013221">
    <property type="entry name" value="Mur_ligase_cen"/>
</dbReference>
<dbReference type="InterPro" id="IPR000713">
    <property type="entry name" value="Mur_ligase_N"/>
</dbReference>
<dbReference type="InterPro" id="IPR050061">
    <property type="entry name" value="MurCDEF_pg_biosynth"/>
</dbReference>
<dbReference type="InterPro" id="IPR005758">
    <property type="entry name" value="UDP-N-AcMur_Ala_ligase_MurC"/>
</dbReference>
<dbReference type="NCBIfam" id="TIGR01082">
    <property type="entry name" value="murC"/>
    <property type="match status" value="1"/>
</dbReference>
<dbReference type="PANTHER" id="PTHR43445:SF3">
    <property type="entry name" value="UDP-N-ACETYLMURAMATE--L-ALANINE LIGASE"/>
    <property type="match status" value="1"/>
</dbReference>
<dbReference type="PANTHER" id="PTHR43445">
    <property type="entry name" value="UDP-N-ACETYLMURAMATE--L-ALANINE LIGASE-RELATED"/>
    <property type="match status" value="1"/>
</dbReference>
<dbReference type="Pfam" id="PF01225">
    <property type="entry name" value="Mur_ligase"/>
    <property type="match status" value="1"/>
</dbReference>
<dbReference type="Pfam" id="PF02875">
    <property type="entry name" value="Mur_ligase_C"/>
    <property type="match status" value="1"/>
</dbReference>
<dbReference type="Pfam" id="PF08245">
    <property type="entry name" value="Mur_ligase_M"/>
    <property type="match status" value="1"/>
</dbReference>
<dbReference type="SUPFAM" id="SSF51984">
    <property type="entry name" value="MurCD N-terminal domain"/>
    <property type="match status" value="1"/>
</dbReference>
<dbReference type="SUPFAM" id="SSF53623">
    <property type="entry name" value="MurD-like peptide ligases, catalytic domain"/>
    <property type="match status" value="1"/>
</dbReference>
<dbReference type="SUPFAM" id="SSF53244">
    <property type="entry name" value="MurD-like peptide ligases, peptide-binding domain"/>
    <property type="match status" value="1"/>
</dbReference>
<accession>C4L4P1</accession>
<reference key="1">
    <citation type="journal article" date="2011" name="J. Bacteriol.">
        <title>Complete genome sequence of the Thermophilic Bacterium Exiguobacterium sp. AT1b.</title>
        <authorList>
            <person name="Vishnivetskaya T.A."/>
            <person name="Lucas S."/>
            <person name="Copeland A."/>
            <person name="Lapidus A."/>
            <person name="Glavina del Rio T."/>
            <person name="Dalin E."/>
            <person name="Tice H."/>
            <person name="Bruce D.C."/>
            <person name="Goodwin L.A."/>
            <person name="Pitluck S."/>
            <person name="Saunders E."/>
            <person name="Brettin T."/>
            <person name="Detter C."/>
            <person name="Han C."/>
            <person name="Larimer F."/>
            <person name="Land M.L."/>
            <person name="Hauser L.J."/>
            <person name="Kyrpides N.C."/>
            <person name="Ovchinnikova G."/>
            <person name="Kathariou S."/>
            <person name="Ramaley R.F."/>
            <person name="Rodrigues D.F."/>
            <person name="Hendrix C."/>
            <person name="Richardson P."/>
            <person name="Tiedje J.M."/>
        </authorList>
    </citation>
    <scope>NUCLEOTIDE SEQUENCE [LARGE SCALE GENOMIC DNA]</scope>
    <source>
        <strain>ATCC BAA-1283 / AT1b</strain>
    </source>
</reference>
<name>MURC_EXISA</name>
<organism>
    <name type="scientific">Exiguobacterium sp. (strain ATCC BAA-1283 / AT1b)</name>
    <dbReference type="NCBI Taxonomy" id="360911"/>
    <lineage>
        <taxon>Bacteria</taxon>
        <taxon>Bacillati</taxon>
        <taxon>Bacillota</taxon>
        <taxon>Bacilli</taxon>
        <taxon>Bacillales</taxon>
        <taxon>Bacillales Family XII. Incertae Sedis</taxon>
        <taxon>Exiguobacterium</taxon>
    </lineage>
</organism>
<proteinExistence type="inferred from homology"/>
<keyword id="KW-0067">ATP-binding</keyword>
<keyword id="KW-0131">Cell cycle</keyword>
<keyword id="KW-0132">Cell division</keyword>
<keyword id="KW-0133">Cell shape</keyword>
<keyword id="KW-0961">Cell wall biogenesis/degradation</keyword>
<keyword id="KW-0963">Cytoplasm</keyword>
<keyword id="KW-0436">Ligase</keyword>
<keyword id="KW-0547">Nucleotide-binding</keyword>
<keyword id="KW-0573">Peptidoglycan synthesis</keyword>
<sequence>MNRYHFVGIKGTGMSPLAQILFDMNNEVRGSDVEKAFFTEEALNRKGIEILPFDPENISEDQIVVQGNAFSDDHPEIVRARELGLTIYKYYEFLGELANHYTSVAITGSHGKTSTTGLLAHVMRGIEPTSFLIGDGTGEGVADSKNFVFEACEYKRHFLYYRPDYAIMTNIDFDHSDYFSGLDDVIDAFQEMAKQVKKGIIACGDDENLQQIQANVPLVYYGFGAHNDFRAEQVTSTENGTTFDVFLRDDFYGTFRIPGYGDHSVLNALAVIATCDYENLPKELVKERLETFNGVKRRFSESTLNDQVLVDDYAHHPREISATVEAARKKYGNREVVAIFQPHTYTRLKSFMDDFATALAEADTVYLCDIFGSAREQEGTVTIEDLQSRIEGAHILKRGGTGVLRNHADAVLLFMGAGDIQTYQREYEEVVKLEA</sequence>
<evidence type="ECO:0000255" key="1">
    <source>
        <dbReference type="HAMAP-Rule" id="MF_00046"/>
    </source>
</evidence>
<comment type="function">
    <text evidence="1">Cell wall formation.</text>
</comment>
<comment type="catalytic activity">
    <reaction evidence="1">
        <text>UDP-N-acetyl-alpha-D-muramate + L-alanine + ATP = UDP-N-acetyl-alpha-D-muramoyl-L-alanine + ADP + phosphate + H(+)</text>
        <dbReference type="Rhea" id="RHEA:23372"/>
        <dbReference type="ChEBI" id="CHEBI:15378"/>
        <dbReference type="ChEBI" id="CHEBI:30616"/>
        <dbReference type="ChEBI" id="CHEBI:43474"/>
        <dbReference type="ChEBI" id="CHEBI:57972"/>
        <dbReference type="ChEBI" id="CHEBI:70757"/>
        <dbReference type="ChEBI" id="CHEBI:83898"/>
        <dbReference type="ChEBI" id="CHEBI:456216"/>
        <dbReference type="EC" id="6.3.2.8"/>
    </reaction>
</comment>
<comment type="pathway">
    <text evidence="1">Cell wall biogenesis; peptidoglycan biosynthesis.</text>
</comment>
<comment type="subcellular location">
    <subcellularLocation>
        <location evidence="1">Cytoplasm</location>
    </subcellularLocation>
</comment>
<comment type="similarity">
    <text evidence="1">Belongs to the MurCDEF family.</text>
</comment>
<protein>
    <recommendedName>
        <fullName evidence="1">UDP-N-acetylmuramate--L-alanine ligase</fullName>
        <ecNumber evidence="1">6.3.2.8</ecNumber>
    </recommendedName>
    <alternativeName>
        <fullName evidence="1">UDP-N-acetylmuramoyl-L-alanine synthetase</fullName>
    </alternativeName>
</protein>